<keyword id="KW-0067">ATP-binding</keyword>
<keyword id="KW-0080">Bacteriocin transport</keyword>
<keyword id="KW-1003">Cell membrane</keyword>
<keyword id="KW-0378">Hydrolase</keyword>
<keyword id="KW-0472">Membrane</keyword>
<keyword id="KW-0547">Nucleotide-binding</keyword>
<keyword id="KW-0614">Plasmid</keyword>
<keyword id="KW-0645">Protease</keyword>
<keyword id="KW-0653">Protein transport</keyword>
<keyword id="KW-0788">Thiol protease</keyword>
<keyword id="KW-1278">Translocase</keyword>
<keyword id="KW-0812">Transmembrane</keyword>
<keyword id="KW-1133">Transmembrane helix</keyword>
<keyword id="KW-0813">Transport</keyword>
<name>MESD_LEUME</name>
<organism>
    <name type="scientific">Leuconostoc mesenteroides</name>
    <dbReference type="NCBI Taxonomy" id="1245"/>
    <lineage>
        <taxon>Bacteria</taxon>
        <taxon>Bacillati</taxon>
        <taxon>Bacillota</taxon>
        <taxon>Bacilli</taxon>
        <taxon>Lactobacillales</taxon>
        <taxon>Lactobacillaceae</taxon>
        <taxon>Leuconostoc</taxon>
    </lineage>
</organism>
<reference key="1">
    <citation type="journal article" date="1995" name="Microbiology">
        <title>Mesentericin Y105 gene clusters in Leuconostoc mesenteroides Y105.</title>
        <authorList>
            <person name="Fremaux C."/>
            <person name="Hechard A."/>
            <person name="Cenatiempo Y."/>
        </authorList>
    </citation>
    <scope>NUCLEOTIDE SEQUENCE [GENOMIC DNA]</scope>
    <source>
        <strain>Y105</strain>
    </source>
</reference>
<comment type="function">
    <text>Involved in the export process of the bacteriocin mesentericin-Y105.</text>
</comment>
<comment type="subcellular location">
    <subcellularLocation>
        <location>Cell membrane</location>
        <topology>Multi-pass membrane protein</topology>
    </subcellularLocation>
</comment>
<comment type="similarity">
    <text evidence="4">Belongs to the ABC transporter superfamily.</text>
</comment>
<sequence>MVKTPMFHKKIDYISQVDERDCGVAALAMILAHYKTRLSLAKLRDLAKTDMEGTTALGIVKAANALDFETMPIQADLSLFDKKDLPYPFIAHVIKEGKYPHYYVVYGMKGDQLLIADPDNTVGKTKMTKAHFNEEWTGVSIFIAPNPTYKPTKEKKRSLTSFIPVITRQKLLVINIVIAALLVTLVSILGSYYLQGIIDTYIPNNMKNTLGIVSLGLIFAYVIQQLLSYARDYLLIVMGQRLSIDIILSYIKHIFELPMSFFATRRTGEIVSRFTDANAIIEALASTMLSVFLDLGILVIVGTVLVVQNSTLFLISLIAIPAYALVVWLFMRPFSKMNNDQMQAGSMLSSSIIEDINGVETIKALNSEATAYHKIDHEFVTYLEKSFVYAKTEAVQNAIKSLLQLSLNVVILWVGAQLVMTNKISVGQLITYNALLGFFTDPLQNIINLQTKLQQASVANNRLNEVYLVDSEFKDSHQMTEKITPNSSLVADHITYKYGFGAPAIDDVSLTITAGEKIALVGISGSGKSTLVKLLVNFFQPESGTISLGPTPLANLDKHELRGHINYLPQEPFIFSGSIMENLLLGAKPGTTQEDIIRAVEIAEIKDDIEKMSQGFGTELAESGNISGGQKQRIALARAILVDSPVLILDESTSNLDVLTEKKIIDNLMKLTEKTIIFVAHRLTISQRVDRILTMQSGKIIEDGTHDTLLKAGGFYASLFNH</sequence>
<dbReference type="EC" id="3.4.22.-"/>
<dbReference type="EC" id="7.-.-.-"/>
<dbReference type="EMBL" id="X81803">
    <property type="protein sequence ID" value="CAA57402.1"/>
    <property type="molecule type" value="Genomic_DNA"/>
</dbReference>
<dbReference type="PIR" id="S52205">
    <property type="entry name" value="S52205"/>
</dbReference>
<dbReference type="SMR" id="Q10418"/>
<dbReference type="MEROPS" id="C39.001"/>
<dbReference type="TCDB" id="3.A.1.112.8">
    <property type="family name" value="the atp-binding cassette (abc) superfamily"/>
</dbReference>
<dbReference type="GO" id="GO:0005886">
    <property type="term" value="C:plasma membrane"/>
    <property type="evidence" value="ECO:0007669"/>
    <property type="project" value="UniProtKB-SubCell"/>
</dbReference>
<dbReference type="GO" id="GO:0043214">
    <property type="term" value="F:ABC-type bacteriocin transporter activity"/>
    <property type="evidence" value="ECO:0007669"/>
    <property type="project" value="InterPro"/>
</dbReference>
<dbReference type="GO" id="GO:0005524">
    <property type="term" value="F:ATP binding"/>
    <property type="evidence" value="ECO:0007669"/>
    <property type="project" value="UniProtKB-KW"/>
</dbReference>
<dbReference type="GO" id="GO:0016887">
    <property type="term" value="F:ATP hydrolysis activity"/>
    <property type="evidence" value="ECO:0007669"/>
    <property type="project" value="InterPro"/>
</dbReference>
<dbReference type="GO" id="GO:0034040">
    <property type="term" value="F:ATPase-coupled lipid transmembrane transporter activity"/>
    <property type="evidence" value="ECO:0007669"/>
    <property type="project" value="TreeGrafter"/>
</dbReference>
<dbReference type="GO" id="GO:0008234">
    <property type="term" value="F:cysteine-type peptidase activity"/>
    <property type="evidence" value="ECO:0007669"/>
    <property type="project" value="UniProtKB-KW"/>
</dbReference>
<dbReference type="GO" id="GO:0015031">
    <property type="term" value="P:protein transport"/>
    <property type="evidence" value="ECO:0007669"/>
    <property type="project" value="UniProtKB-KW"/>
</dbReference>
<dbReference type="GO" id="GO:0006508">
    <property type="term" value="P:proteolysis"/>
    <property type="evidence" value="ECO:0007669"/>
    <property type="project" value="UniProtKB-KW"/>
</dbReference>
<dbReference type="CDD" id="cd18570">
    <property type="entry name" value="ABC_6TM_PCAT1_LagD_like"/>
    <property type="match status" value="1"/>
</dbReference>
<dbReference type="CDD" id="cd02418">
    <property type="entry name" value="Peptidase_C39B"/>
    <property type="match status" value="1"/>
</dbReference>
<dbReference type="FunFam" id="3.40.50.300:FF:000299">
    <property type="entry name" value="ABC transporter ATP-binding protein/permease"/>
    <property type="match status" value="1"/>
</dbReference>
<dbReference type="Gene3D" id="1.20.1560.10">
    <property type="entry name" value="ABC transporter type 1, transmembrane domain"/>
    <property type="match status" value="1"/>
</dbReference>
<dbReference type="Gene3D" id="3.90.70.10">
    <property type="entry name" value="Cysteine proteinases"/>
    <property type="match status" value="1"/>
</dbReference>
<dbReference type="Gene3D" id="3.40.50.300">
    <property type="entry name" value="P-loop containing nucleotide triphosphate hydrolases"/>
    <property type="match status" value="1"/>
</dbReference>
<dbReference type="InterPro" id="IPR003593">
    <property type="entry name" value="AAA+_ATPase"/>
</dbReference>
<dbReference type="InterPro" id="IPR011527">
    <property type="entry name" value="ABC1_TM_dom"/>
</dbReference>
<dbReference type="InterPro" id="IPR036640">
    <property type="entry name" value="ABC1_TM_sf"/>
</dbReference>
<dbReference type="InterPro" id="IPR003439">
    <property type="entry name" value="ABC_transporter-like_ATP-bd"/>
</dbReference>
<dbReference type="InterPro" id="IPR017871">
    <property type="entry name" value="ABC_transporter-like_CS"/>
</dbReference>
<dbReference type="InterPro" id="IPR027417">
    <property type="entry name" value="P-loop_NTPase"/>
</dbReference>
<dbReference type="InterPro" id="IPR005897">
    <property type="entry name" value="Pept_C39_ABC_bacteriocin"/>
</dbReference>
<dbReference type="InterPro" id="IPR005074">
    <property type="entry name" value="Peptidase_C39"/>
</dbReference>
<dbReference type="InterPro" id="IPR039421">
    <property type="entry name" value="Type_1_exporter"/>
</dbReference>
<dbReference type="NCBIfam" id="TIGR01193">
    <property type="entry name" value="bacteriocin_ABC"/>
    <property type="match status" value="1"/>
</dbReference>
<dbReference type="PANTHER" id="PTHR24221">
    <property type="entry name" value="ATP-BINDING CASSETTE SUB-FAMILY B"/>
    <property type="match status" value="1"/>
</dbReference>
<dbReference type="PANTHER" id="PTHR24221:SF654">
    <property type="entry name" value="ATP-BINDING CASSETTE SUB-FAMILY B MEMBER 6"/>
    <property type="match status" value="1"/>
</dbReference>
<dbReference type="Pfam" id="PF00664">
    <property type="entry name" value="ABC_membrane"/>
    <property type="match status" value="1"/>
</dbReference>
<dbReference type="Pfam" id="PF00005">
    <property type="entry name" value="ABC_tran"/>
    <property type="match status" value="1"/>
</dbReference>
<dbReference type="Pfam" id="PF03412">
    <property type="entry name" value="Peptidase_C39"/>
    <property type="match status" value="1"/>
</dbReference>
<dbReference type="SMART" id="SM00382">
    <property type="entry name" value="AAA"/>
    <property type="match status" value="1"/>
</dbReference>
<dbReference type="SUPFAM" id="SSF90123">
    <property type="entry name" value="ABC transporter transmembrane region"/>
    <property type="match status" value="1"/>
</dbReference>
<dbReference type="SUPFAM" id="SSF52540">
    <property type="entry name" value="P-loop containing nucleoside triphosphate hydrolases"/>
    <property type="match status" value="1"/>
</dbReference>
<dbReference type="PROSITE" id="PS50929">
    <property type="entry name" value="ABC_TM1F"/>
    <property type="match status" value="1"/>
</dbReference>
<dbReference type="PROSITE" id="PS00211">
    <property type="entry name" value="ABC_TRANSPORTER_1"/>
    <property type="match status" value="1"/>
</dbReference>
<dbReference type="PROSITE" id="PS50893">
    <property type="entry name" value="ABC_TRANSPORTER_2"/>
    <property type="match status" value="1"/>
</dbReference>
<dbReference type="PROSITE" id="PS50990">
    <property type="entry name" value="PEPTIDASE_C39"/>
    <property type="match status" value="1"/>
</dbReference>
<gene>
    <name type="primary">mesD</name>
</gene>
<proteinExistence type="inferred from homology"/>
<accession>Q10418</accession>
<geneLocation type="plasmid">
    <name>pHY30</name>
</geneLocation>
<protein>
    <recommendedName>
        <fullName>Mesentericin-Y105 transport/processing ATP-binding protein MesD</fullName>
        <ecNumber>3.4.22.-</ecNumber>
        <ecNumber>7.-.-.-</ecNumber>
    </recommendedName>
</protein>
<evidence type="ECO:0000255" key="1">
    <source>
        <dbReference type="PROSITE-ProRule" id="PRU00362"/>
    </source>
</evidence>
<evidence type="ECO:0000255" key="2">
    <source>
        <dbReference type="PROSITE-ProRule" id="PRU00434"/>
    </source>
</evidence>
<evidence type="ECO:0000255" key="3">
    <source>
        <dbReference type="PROSITE-ProRule" id="PRU00441"/>
    </source>
</evidence>
<evidence type="ECO:0000305" key="4"/>
<feature type="chain" id="PRO_0000092502" description="Mesentericin-Y105 transport/processing ATP-binding protein MesD">
    <location>
        <begin position="1"/>
        <end position="722"/>
    </location>
</feature>
<feature type="transmembrane region" description="Helical" evidence="3">
    <location>
        <begin position="171"/>
        <end position="191"/>
    </location>
</feature>
<feature type="transmembrane region" description="Helical" evidence="3">
    <location>
        <begin position="210"/>
        <end position="230"/>
    </location>
</feature>
<feature type="transmembrane region" description="Helical" evidence="3">
    <location>
        <begin position="242"/>
        <end position="262"/>
    </location>
</feature>
<feature type="transmembrane region" description="Helical" evidence="3">
    <location>
        <begin position="287"/>
        <end position="307"/>
    </location>
</feature>
<feature type="transmembrane region" description="Helical" evidence="3">
    <location>
        <begin position="311"/>
        <end position="331"/>
    </location>
</feature>
<feature type="transmembrane region" description="Helical" evidence="3">
    <location>
        <begin position="401"/>
        <end position="421"/>
    </location>
</feature>
<feature type="transmembrane region" description="Helical" evidence="3">
    <location>
        <begin position="429"/>
        <end position="449"/>
    </location>
</feature>
<feature type="transmembrane region" description="Helical" evidence="3">
    <location>
        <begin position="518"/>
        <end position="538"/>
    </location>
</feature>
<feature type="domain" description="Peptidase C39" evidence="1">
    <location>
        <begin position="16"/>
        <end position="143"/>
    </location>
</feature>
<feature type="domain" description="ABC transmembrane type-1" evidence="3">
    <location>
        <begin position="173"/>
        <end position="455"/>
    </location>
</feature>
<feature type="domain" description="ABC transporter" evidence="1 2">
    <location>
        <begin position="489"/>
        <end position="722"/>
    </location>
</feature>
<feature type="active site" evidence="1">
    <location>
        <position position="22"/>
    </location>
</feature>
<feature type="binding site" evidence="1 2">
    <location>
        <begin position="522"/>
        <end position="529"/>
    </location>
    <ligand>
        <name>ATP</name>
        <dbReference type="ChEBI" id="CHEBI:30616"/>
    </ligand>
</feature>